<keyword id="KW-1015">Disulfide bond</keyword>
<keyword id="KW-0960">Knottin</keyword>
<keyword id="KW-0964">Secreted</keyword>
<keyword id="KW-0732">Signal</keyword>
<keyword id="KW-0800">Toxin</keyword>
<name>O16E_CONAB</name>
<accession>Q9UA85</accession>
<evidence type="ECO:0000250" key="1"/>
<evidence type="ECO:0000255" key="2"/>
<evidence type="ECO:0000305" key="3"/>
<comment type="subcellular location">
    <subcellularLocation>
        <location evidence="1">Secreted</location>
    </subcellularLocation>
</comment>
<comment type="tissue specificity">
    <text>Expressed by the venom duct.</text>
</comment>
<comment type="domain">
    <text evidence="1">The presence of a 'disulfide through disulfide knot' structurally defines this protein as a knottin.</text>
</comment>
<comment type="domain">
    <text>The cysteine framework is VI/VII (C-C-CC-C-C).</text>
</comment>
<comment type="similarity">
    <text evidence="3">Belongs to the conotoxin O1 superfamily.</text>
</comment>
<dbReference type="EMBL" id="AF090007">
    <property type="protein sequence ID" value="AAD48261.1"/>
    <property type="molecule type" value="mRNA"/>
</dbReference>
<dbReference type="ConoServer" id="983">
    <property type="toxin name" value="ABVIE precursor"/>
</dbReference>
<dbReference type="GO" id="GO:0005576">
    <property type="term" value="C:extracellular region"/>
    <property type="evidence" value="ECO:0007669"/>
    <property type="project" value="UniProtKB-SubCell"/>
</dbReference>
<dbReference type="GO" id="GO:0008200">
    <property type="term" value="F:ion channel inhibitor activity"/>
    <property type="evidence" value="ECO:0007669"/>
    <property type="project" value="InterPro"/>
</dbReference>
<dbReference type="GO" id="GO:0090729">
    <property type="term" value="F:toxin activity"/>
    <property type="evidence" value="ECO:0007669"/>
    <property type="project" value="UniProtKB-KW"/>
</dbReference>
<dbReference type="InterPro" id="IPR004214">
    <property type="entry name" value="Conotoxin"/>
</dbReference>
<dbReference type="Pfam" id="PF02950">
    <property type="entry name" value="Conotoxin"/>
    <property type="match status" value="1"/>
</dbReference>
<feature type="signal peptide" evidence="2">
    <location>
        <begin position="1" status="less than"/>
        <end position="17"/>
    </location>
</feature>
<feature type="propeptide" id="PRO_0000392118" evidence="1">
    <location>
        <begin position="18"/>
        <end position="40"/>
    </location>
</feature>
<feature type="peptide" id="PRO_0000392119" description="Conotoxin AbVIE">
    <location>
        <begin position="42"/>
        <end position="69"/>
    </location>
</feature>
<feature type="disulfide bond" evidence="1">
    <location>
        <begin position="43"/>
        <end position="57"/>
    </location>
</feature>
<feature type="disulfide bond" evidence="1">
    <location>
        <begin position="50"/>
        <end position="61"/>
    </location>
</feature>
<feature type="disulfide bond" evidence="1">
    <location>
        <begin position="56"/>
        <end position="66"/>
    </location>
</feature>
<feature type="non-terminal residue">
    <location>
        <position position="1"/>
    </location>
</feature>
<reference key="1">
    <citation type="journal article" date="1999" name="Proc. Natl. Acad. Sci. U.S.A.">
        <title>Molecular genetics of ecological diversification: duplication and rapid evolution of toxin genes of the venomous gastropod Conus.</title>
        <authorList>
            <person name="Duda T.F. Jr."/>
            <person name="Palumbi S.R."/>
        </authorList>
    </citation>
    <scope>NUCLEOTIDE SEQUENCE [MRNA]</scope>
    <source>
        <tissue>Venom duct</tissue>
    </source>
</reference>
<reference key="2">
    <citation type="journal article" date="2004" name="Proc. R. Soc. B">
        <title>Gene expression and feeding ecology: evolution of piscivory in the venomous gastropod genus Conus.</title>
        <authorList>
            <person name="Duda T.F. Jr."/>
            <person name="Palumbi S.R."/>
        </authorList>
    </citation>
    <scope>NUCLEOTIDE SEQUENCE [MRNA]</scope>
    <source>
        <tissue>Venom duct</tissue>
    </source>
</reference>
<proteinExistence type="evidence at transcript level"/>
<organism>
    <name type="scientific">Conus abbreviatus</name>
    <name type="common">Abbreviated cone</name>
    <name type="synonym">Miliariconus abbreviatus</name>
    <dbReference type="NCBI Taxonomy" id="100123"/>
    <lineage>
        <taxon>Eukaryota</taxon>
        <taxon>Metazoa</taxon>
        <taxon>Spiralia</taxon>
        <taxon>Lophotrochozoa</taxon>
        <taxon>Mollusca</taxon>
        <taxon>Gastropoda</taxon>
        <taxon>Caenogastropoda</taxon>
        <taxon>Neogastropoda</taxon>
        <taxon>Conoidea</taxon>
        <taxon>Conidae</taxon>
        <taxon>Conus</taxon>
        <taxon>Virroconus</taxon>
    </lineage>
</organism>
<protein>
    <recommendedName>
        <fullName>Conotoxin AbVIE</fullName>
    </recommendedName>
</protein>
<sequence>VLIIAVLFLTACQLTTAETSSRGKQKHRALRSTDKYSRMTKHCTPPEVGCLFAYECCSKICWRPRCYPS</sequence>